<gene>
    <name type="primary">APUM24</name>
    <name type="ordered locus">At3g16810</name>
    <name type="ORF">K20I9_3</name>
</gene>
<reference key="1">
    <citation type="journal article" date="2000" name="DNA Res.">
        <title>Structural analysis of Arabidopsis thaliana chromosome 3. I. Sequence features of the regions of 4,504,864 bp covered by sixty P1 and TAC clones.</title>
        <authorList>
            <person name="Sato S."/>
            <person name="Nakamura Y."/>
            <person name="Kaneko T."/>
            <person name="Katoh T."/>
            <person name="Asamizu E."/>
            <person name="Tabata S."/>
        </authorList>
    </citation>
    <scope>NUCLEOTIDE SEQUENCE [LARGE SCALE GENOMIC DNA]</scope>
    <source>
        <strain>cv. Columbia</strain>
    </source>
</reference>
<reference key="2">
    <citation type="journal article" date="2017" name="Plant J.">
        <title>Araport11: a complete reannotation of the Arabidopsis thaliana reference genome.</title>
        <authorList>
            <person name="Cheng C.Y."/>
            <person name="Krishnakumar V."/>
            <person name="Chan A.P."/>
            <person name="Thibaud-Nissen F."/>
            <person name="Schobel S."/>
            <person name="Town C.D."/>
        </authorList>
    </citation>
    <scope>GENOME REANNOTATION</scope>
    <source>
        <strain>cv. Columbia</strain>
    </source>
</reference>
<reference key="3">
    <citation type="journal article" date="2003" name="Science">
        <title>Empirical analysis of transcriptional activity in the Arabidopsis genome.</title>
        <authorList>
            <person name="Yamada K."/>
            <person name="Lim J."/>
            <person name="Dale J.M."/>
            <person name="Chen H."/>
            <person name="Shinn P."/>
            <person name="Palm C.J."/>
            <person name="Southwick A.M."/>
            <person name="Wu H.C."/>
            <person name="Kim C.J."/>
            <person name="Nguyen M."/>
            <person name="Pham P.K."/>
            <person name="Cheuk R.F."/>
            <person name="Karlin-Newmann G."/>
            <person name="Liu S.X."/>
            <person name="Lam B."/>
            <person name="Sakano H."/>
            <person name="Wu T."/>
            <person name="Yu G."/>
            <person name="Miranda M."/>
            <person name="Quach H.L."/>
            <person name="Tripp M."/>
            <person name="Chang C.H."/>
            <person name="Lee J.M."/>
            <person name="Toriumi M.J."/>
            <person name="Chan M.M."/>
            <person name="Tang C.C."/>
            <person name="Onodera C.S."/>
            <person name="Deng J.M."/>
            <person name="Akiyama K."/>
            <person name="Ansari Y."/>
            <person name="Arakawa T."/>
            <person name="Banh J."/>
            <person name="Banno F."/>
            <person name="Bowser L."/>
            <person name="Brooks S.Y."/>
            <person name="Carninci P."/>
            <person name="Chao Q."/>
            <person name="Choy N."/>
            <person name="Enju A."/>
            <person name="Goldsmith A.D."/>
            <person name="Gurjal M."/>
            <person name="Hansen N.F."/>
            <person name="Hayashizaki Y."/>
            <person name="Johnson-Hopson C."/>
            <person name="Hsuan V.W."/>
            <person name="Iida K."/>
            <person name="Karnes M."/>
            <person name="Khan S."/>
            <person name="Koesema E."/>
            <person name="Ishida J."/>
            <person name="Jiang P.X."/>
            <person name="Jones T."/>
            <person name="Kawai J."/>
            <person name="Kamiya A."/>
            <person name="Meyers C."/>
            <person name="Nakajima M."/>
            <person name="Narusaka M."/>
            <person name="Seki M."/>
            <person name="Sakurai T."/>
            <person name="Satou M."/>
            <person name="Tamse R."/>
            <person name="Vaysberg M."/>
            <person name="Wallender E.K."/>
            <person name="Wong C."/>
            <person name="Yamamura Y."/>
            <person name="Yuan S."/>
            <person name="Shinozaki K."/>
            <person name="Davis R.W."/>
            <person name="Theologis A."/>
            <person name="Ecker J.R."/>
        </authorList>
    </citation>
    <scope>NUCLEOTIDE SEQUENCE [LARGE SCALE MRNA]</scope>
    <source>
        <strain>cv. Columbia</strain>
    </source>
</reference>
<reference key="4">
    <citation type="journal article" date="2007" name="Mol. Cell. Proteomics">
        <title>Multidimensional protein identification technology (MudPIT) analysis of ubiquitinated proteins in plants.</title>
        <authorList>
            <person name="Maor R."/>
            <person name="Jones A."/>
            <person name="Nuehse T.S."/>
            <person name="Studholme D.J."/>
            <person name="Peck S.C."/>
            <person name="Shirasu K."/>
        </authorList>
    </citation>
    <scope>IDENTIFICATION BY MASS SPECTROMETRY [LARGE SCALE ANALYSIS]</scope>
    <source>
        <strain>cv. Landsberg erecta</strain>
    </source>
</reference>
<reference key="5">
    <citation type="journal article" date="2009" name="FEBS J.">
        <title>Molecular characterization of Arabidopsis thaliana PUF proteins -- binding specificity and target candidates.</title>
        <authorList>
            <person name="Francischini C.W."/>
            <person name="Quaggio R.B."/>
        </authorList>
    </citation>
    <scope>GENE FAMILY</scope>
</reference>
<reference key="6">
    <citation type="journal article" date="2010" name="BMC Plant Biol.">
        <title>The Puf family of RNA-binding proteins in plants: phylogeny, structural modeling, activity and subcellular localization.</title>
        <authorList>
            <person name="Tam P.P."/>
            <person name="Barrette-Ng I.H."/>
            <person name="Simon D.M."/>
            <person name="Tam M.W."/>
            <person name="Ang A.L."/>
            <person name="Muench D.G."/>
        </authorList>
    </citation>
    <scope>GENE FAMILY</scope>
    <scope>SUBCELLULAR LOCATION</scope>
</reference>
<name>PUM24_ARATH</name>
<comment type="function">
    <text evidence="1">Sequence-specific RNA-binding protein that regulates translation and mRNA stability by binding the 3'-UTR of target mRNAs.</text>
</comment>
<comment type="subcellular location">
    <subcellularLocation>
        <location evidence="4">Nucleus</location>
        <location evidence="4">Nucleolus</location>
    </subcellularLocation>
</comment>
<comment type="domain">
    <text evidence="1">The pumilio repeats mediate the association with RNA by packing together to form a right-handed superhelix that approximates a half donut. The number as well as the specific sequence of the repeats determine the specificity for target mRNAs (By similarity).</text>
</comment>
<protein>
    <recommendedName>
        <fullName>Pumilio homolog 24</fullName>
        <shortName>APUM-24</shortName>
        <shortName>AtPUM24</shortName>
    </recommendedName>
</protein>
<sequence>MSSKGLKPQKSTKRKDTDSSAKFDSLKSKKPKLVSGEQQQHVKPKFGKPKSAGDKEQSTNLSKKERRVQAKELTEARKKKRKPHYNLEQELVSLWEKMRRRNIGKEDRSKLISEAIRKMKGKVPEIAVSHVSSRVLQTCVKFCSQAEKDVLFTELQPQFLNLASNKYAVHFIQKMLDGASKQQLAACISSLRGHVAPLLRHVFGSLVVEHAYHLGSAAQKQELLAELYSTELQLFKGLTTSNEKTVVDIIAKLGLQKGAVNRHMTAIIQPILEKGIVDHTITHKLLIEYLTIADKTSAADVLQLLTGSLLLRMVHTRDGSRLAMLSIKHGSAKERKKIIKAMKEHVKKMAFDQFGSMVLACIFSIVDDTKLVTKIIVRELEATLKDLVMDKNGRRPLLQLLHPNSSRYLSHDDLAALDLSVPSLCSMDKSETSSKTKDTDGNEIGEETKDEQEDTVAEHSDHEENVTAMGGKKDPLVRRQELLVNSGLAERLIDVCVENAEEFLQSKFGNEVMYEVAIGGSDGILCPSLSEKLCELYEAISSVAAEPKPQESEKDSEHILENFHSSRTIRRLVLNRPGFASILFKKALSGKCRSWAQGHCSKILSAFVETEDVQVREMAKTELQVLVNEGTLKISATKKPE</sequence>
<accession>Q9LRZ3</accession>
<feature type="chain" id="PRO_0000401406" description="Pumilio homolog 24">
    <location>
        <begin position="1"/>
        <end position="641"/>
    </location>
</feature>
<feature type="domain" description="PUM-HD" evidence="2">
    <location>
        <begin position="9"/>
        <end position="404"/>
    </location>
</feature>
<feature type="repeat" description="Pumilio 1">
    <location>
        <begin position="118"/>
        <end position="153"/>
    </location>
</feature>
<feature type="repeat" description="Pumilio 2">
    <location>
        <begin position="154"/>
        <end position="189"/>
    </location>
</feature>
<feature type="repeat" description="Pumilio 3">
    <location>
        <begin position="190"/>
        <end position="225"/>
    </location>
</feature>
<feature type="repeat" description="Pumilio 4">
    <location>
        <begin position="303"/>
        <end position="340"/>
    </location>
</feature>
<feature type="repeat" description="Pumilio 5">
    <location>
        <begin position="341"/>
        <end position="378"/>
    </location>
</feature>
<feature type="region of interest" description="Disordered" evidence="3">
    <location>
        <begin position="1"/>
        <end position="82"/>
    </location>
</feature>
<feature type="region of interest" description="Disordered" evidence="3">
    <location>
        <begin position="427"/>
        <end position="468"/>
    </location>
</feature>
<feature type="compositionally biased region" description="Basic and acidic residues" evidence="3">
    <location>
        <begin position="14"/>
        <end position="27"/>
    </location>
</feature>
<feature type="compositionally biased region" description="Basic and acidic residues" evidence="3">
    <location>
        <begin position="67"/>
        <end position="76"/>
    </location>
</feature>
<feature type="compositionally biased region" description="Basic and acidic residues" evidence="3">
    <location>
        <begin position="428"/>
        <end position="440"/>
    </location>
</feature>
<feature type="compositionally biased region" description="Acidic residues" evidence="3">
    <location>
        <begin position="441"/>
        <end position="455"/>
    </location>
</feature>
<feature type="compositionally biased region" description="Basic and acidic residues" evidence="3">
    <location>
        <begin position="456"/>
        <end position="468"/>
    </location>
</feature>
<evidence type="ECO:0000250" key="1"/>
<evidence type="ECO:0000255" key="2">
    <source>
        <dbReference type="PROSITE-ProRule" id="PRU00318"/>
    </source>
</evidence>
<evidence type="ECO:0000256" key="3">
    <source>
        <dbReference type="SAM" id="MobiDB-lite"/>
    </source>
</evidence>
<evidence type="ECO:0000269" key="4">
    <source>
    </source>
</evidence>
<proteinExistence type="evidence at protein level"/>
<dbReference type="EMBL" id="AB028608">
    <property type="protein sequence ID" value="BAA95774.1"/>
    <property type="molecule type" value="Genomic_DNA"/>
</dbReference>
<dbReference type="EMBL" id="CP002686">
    <property type="protein sequence ID" value="AEE75869.1"/>
    <property type="molecule type" value="Genomic_DNA"/>
</dbReference>
<dbReference type="EMBL" id="AY045638">
    <property type="protein sequence ID" value="AAK73996.1"/>
    <property type="molecule type" value="mRNA"/>
</dbReference>
<dbReference type="RefSeq" id="NP_566559.1">
    <property type="nucleotide sequence ID" value="NM_112555.2"/>
</dbReference>
<dbReference type="SMR" id="Q9LRZ3"/>
<dbReference type="FunCoup" id="Q9LRZ3">
    <property type="interactions" value="2872"/>
</dbReference>
<dbReference type="IntAct" id="Q9LRZ3">
    <property type="interactions" value="1"/>
</dbReference>
<dbReference type="STRING" id="3702.Q9LRZ3"/>
<dbReference type="iPTMnet" id="Q9LRZ3"/>
<dbReference type="PaxDb" id="3702-AT3G16810.1"/>
<dbReference type="ProteomicsDB" id="226115"/>
<dbReference type="EnsemblPlants" id="AT3G16810.1">
    <property type="protein sequence ID" value="AT3G16810.1"/>
    <property type="gene ID" value="AT3G16810"/>
</dbReference>
<dbReference type="GeneID" id="820934"/>
<dbReference type="Gramene" id="AT3G16810.1">
    <property type="protein sequence ID" value="AT3G16810.1"/>
    <property type="gene ID" value="AT3G16810"/>
</dbReference>
<dbReference type="KEGG" id="ath:AT3G16810"/>
<dbReference type="Araport" id="AT3G16810"/>
<dbReference type="TAIR" id="AT3G16810">
    <property type="gene designation" value="PUM24"/>
</dbReference>
<dbReference type="eggNOG" id="KOG2050">
    <property type="taxonomic scope" value="Eukaryota"/>
</dbReference>
<dbReference type="HOGENOM" id="CLU_016751_0_0_1"/>
<dbReference type="InParanoid" id="Q9LRZ3"/>
<dbReference type="OMA" id="GKCEMWA"/>
<dbReference type="OrthoDB" id="497380at2759"/>
<dbReference type="PhylomeDB" id="Q9LRZ3"/>
<dbReference type="CD-CODE" id="4299E36E">
    <property type="entry name" value="Nucleolus"/>
</dbReference>
<dbReference type="PRO" id="PR:Q9LRZ3"/>
<dbReference type="Proteomes" id="UP000006548">
    <property type="component" value="Chromosome 3"/>
</dbReference>
<dbReference type="ExpressionAtlas" id="Q9LRZ3">
    <property type="expression patterns" value="baseline and differential"/>
</dbReference>
<dbReference type="GO" id="GO:0005730">
    <property type="term" value="C:nucleolus"/>
    <property type="evidence" value="ECO:0000314"/>
    <property type="project" value="TAIR"/>
</dbReference>
<dbReference type="GO" id="GO:0003723">
    <property type="term" value="F:RNA binding"/>
    <property type="evidence" value="ECO:0000314"/>
    <property type="project" value="TAIR"/>
</dbReference>
<dbReference type="GO" id="GO:0009793">
    <property type="term" value="P:embryo development ending in seed dormancy"/>
    <property type="evidence" value="ECO:0000315"/>
    <property type="project" value="TAIR"/>
</dbReference>
<dbReference type="GO" id="GO:0006417">
    <property type="term" value="P:regulation of translation"/>
    <property type="evidence" value="ECO:0007669"/>
    <property type="project" value="UniProtKB-KW"/>
</dbReference>
<dbReference type="FunFam" id="1.25.10.10:FF:000818">
    <property type="entry name" value="Pumilio homolog 24"/>
    <property type="match status" value="1"/>
</dbReference>
<dbReference type="Gene3D" id="1.25.10.10">
    <property type="entry name" value="Leucine-rich Repeat Variant"/>
    <property type="match status" value="1"/>
</dbReference>
<dbReference type="InterPro" id="IPR011989">
    <property type="entry name" value="ARM-like"/>
</dbReference>
<dbReference type="InterPro" id="IPR016024">
    <property type="entry name" value="ARM-type_fold"/>
</dbReference>
<dbReference type="InterPro" id="IPR012959">
    <property type="entry name" value="CPL_dom"/>
</dbReference>
<dbReference type="InterPro" id="IPR033133">
    <property type="entry name" value="PUM-HD"/>
</dbReference>
<dbReference type="InterPro" id="IPR040059">
    <property type="entry name" value="PUM3"/>
</dbReference>
<dbReference type="InterPro" id="IPR001313">
    <property type="entry name" value="Pumilio_RNA-bd_rpt"/>
</dbReference>
<dbReference type="PANTHER" id="PTHR13389">
    <property type="entry name" value="PUMILIO HOMOLOG 3"/>
    <property type="match status" value="1"/>
</dbReference>
<dbReference type="PANTHER" id="PTHR13389:SF0">
    <property type="entry name" value="PUMILIO HOMOLOG 3"/>
    <property type="match status" value="1"/>
</dbReference>
<dbReference type="Pfam" id="PF08144">
    <property type="entry name" value="CPL"/>
    <property type="match status" value="1"/>
</dbReference>
<dbReference type="Pfam" id="PF22493">
    <property type="entry name" value="PUF_NOP9"/>
    <property type="match status" value="1"/>
</dbReference>
<dbReference type="SMART" id="SM00025">
    <property type="entry name" value="Pumilio"/>
    <property type="match status" value="5"/>
</dbReference>
<dbReference type="SUPFAM" id="SSF48371">
    <property type="entry name" value="ARM repeat"/>
    <property type="match status" value="1"/>
</dbReference>
<dbReference type="PROSITE" id="PS50302">
    <property type="entry name" value="PUM"/>
    <property type="match status" value="6"/>
</dbReference>
<dbReference type="PROSITE" id="PS50303">
    <property type="entry name" value="PUM_HD"/>
    <property type="match status" value="1"/>
</dbReference>
<keyword id="KW-0539">Nucleus</keyword>
<keyword id="KW-1185">Reference proteome</keyword>
<keyword id="KW-0677">Repeat</keyword>
<keyword id="KW-0694">RNA-binding</keyword>
<keyword id="KW-0810">Translation regulation</keyword>
<organism>
    <name type="scientific">Arabidopsis thaliana</name>
    <name type="common">Mouse-ear cress</name>
    <dbReference type="NCBI Taxonomy" id="3702"/>
    <lineage>
        <taxon>Eukaryota</taxon>
        <taxon>Viridiplantae</taxon>
        <taxon>Streptophyta</taxon>
        <taxon>Embryophyta</taxon>
        <taxon>Tracheophyta</taxon>
        <taxon>Spermatophyta</taxon>
        <taxon>Magnoliopsida</taxon>
        <taxon>eudicotyledons</taxon>
        <taxon>Gunneridae</taxon>
        <taxon>Pentapetalae</taxon>
        <taxon>rosids</taxon>
        <taxon>malvids</taxon>
        <taxon>Brassicales</taxon>
        <taxon>Brassicaceae</taxon>
        <taxon>Camelineae</taxon>
        <taxon>Arabidopsis</taxon>
    </lineage>
</organism>